<proteinExistence type="inferred from homology"/>
<protein>
    <recommendedName>
        <fullName evidence="1">UDP-N-acetylglucosamine--N-acetylmuramyl-(pentapeptide) pyrophosphoryl-undecaprenol N-acetylglucosamine transferase</fullName>
        <ecNumber evidence="1">2.4.1.227</ecNumber>
    </recommendedName>
    <alternativeName>
        <fullName evidence="1">Undecaprenyl-PP-MurNAc-pentapeptide-UDPGlcNAc GlcNAc transferase</fullName>
    </alternativeName>
</protein>
<evidence type="ECO:0000255" key="1">
    <source>
        <dbReference type="HAMAP-Rule" id="MF_00033"/>
    </source>
</evidence>
<accession>C4ZRI5</accession>
<organism>
    <name type="scientific">Escherichia coli (strain K12 / MC4100 / BW2952)</name>
    <dbReference type="NCBI Taxonomy" id="595496"/>
    <lineage>
        <taxon>Bacteria</taxon>
        <taxon>Pseudomonadati</taxon>
        <taxon>Pseudomonadota</taxon>
        <taxon>Gammaproteobacteria</taxon>
        <taxon>Enterobacterales</taxon>
        <taxon>Enterobacteriaceae</taxon>
        <taxon>Escherichia</taxon>
    </lineage>
</organism>
<feature type="chain" id="PRO_1000202019" description="UDP-N-acetylglucosamine--N-acetylmuramyl-(pentapeptide) pyrophosphoryl-undecaprenol N-acetylglucosamine transferase">
    <location>
        <begin position="1"/>
        <end position="355"/>
    </location>
</feature>
<feature type="binding site" evidence="1">
    <location>
        <begin position="15"/>
        <end position="17"/>
    </location>
    <ligand>
        <name>UDP-N-acetyl-alpha-D-glucosamine</name>
        <dbReference type="ChEBI" id="CHEBI:57705"/>
    </ligand>
</feature>
<feature type="binding site" evidence="1">
    <location>
        <position position="127"/>
    </location>
    <ligand>
        <name>UDP-N-acetyl-alpha-D-glucosamine</name>
        <dbReference type="ChEBI" id="CHEBI:57705"/>
    </ligand>
</feature>
<feature type="binding site" evidence="1">
    <location>
        <position position="163"/>
    </location>
    <ligand>
        <name>UDP-N-acetyl-alpha-D-glucosamine</name>
        <dbReference type="ChEBI" id="CHEBI:57705"/>
    </ligand>
</feature>
<feature type="binding site" evidence="1">
    <location>
        <position position="191"/>
    </location>
    <ligand>
        <name>UDP-N-acetyl-alpha-D-glucosamine</name>
        <dbReference type="ChEBI" id="CHEBI:57705"/>
    </ligand>
</feature>
<feature type="binding site" evidence="1">
    <location>
        <position position="244"/>
    </location>
    <ligand>
        <name>UDP-N-acetyl-alpha-D-glucosamine</name>
        <dbReference type="ChEBI" id="CHEBI:57705"/>
    </ligand>
</feature>
<feature type="binding site" evidence="1">
    <location>
        <begin position="263"/>
        <end position="268"/>
    </location>
    <ligand>
        <name>UDP-N-acetyl-alpha-D-glucosamine</name>
        <dbReference type="ChEBI" id="CHEBI:57705"/>
    </ligand>
</feature>
<feature type="binding site" evidence="1">
    <location>
        <position position="288"/>
    </location>
    <ligand>
        <name>UDP-N-acetyl-alpha-D-glucosamine</name>
        <dbReference type="ChEBI" id="CHEBI:57705"/>
    </ligand>
</feature>
<sequence>MSGQGKRLMVMAGGTGGHVFPGLAVAHHLMAQGWQVRWLGTADRMEADLVPKHGIEIDFIRISGLRGKGIKALIAAPLRIFNAWRQARAIMKAYKPDVVLGMGGYVSGPGGLAAWSLGIPVVLHEQNGIAGLTNKWLAKIATKVMQAFPGAFPNAEVVGNPVRTDVLALPLPQQRLAGREGPVRVLVVGGSQGARILNQTMPQVAAKLGDSVTIWHQSGKGSQQSVEQAYAEAGQPQHKVTEFIDDMAAAYAWADVVVCRSGALTVSEIAAAGLPALFVPFQHKDRQQYWNALPLEKAGAAKIIEQPQLSVDAVANTLAGWSRETLLTMAERARAASIPDATERVANEVSRVARA</sequence>
<gene>
    <name evidence="1" type="primary">murG</name>
    <name type="ordered locus">BWG_0085</name>
</gene>
<name>MURG_ECOBW</name>
<comment type="function">
    <text evidence="1">Cell wall formation. Catalyzes the transfer of a GlcNAc subunit on undecaprenyl-pyrophosphoryl-MurNAc-pentapeptide (lipid intermediate I) to form undecaprenyl-pyrophosphoryl-MurNAc-(pentapeptide)GlcNAc (lipid intermediate II).</text>
</comment>
<comment type="catalytic activity">
    <reaction evidence="1">
        <text>di-trans,octa-cis-undecaprenyl diphospho-N-acetyl-alpha-D-muramoyl-L-alanyl-D-glutamyl-meso-2,6-diaminopimeloyl-D-alanyl-D-alanine + UDP-N-acetyl-alpha-D-glucosamine = di-trans,octa-cis-undecaprenyl diphospho-[N-acetyl-alpha-D-glucosaminyl-(1-&gt;4)]-N-acetyl-alpha-D-muramoyl-L-alanyl-D-glutamyl-meso-2,6-diaminopimeloyl-D-alanyl-D-alanine + UDP + H(+)</text>
        <dbReference type="Rhea" id="RHEA:31227"/>
        <dbReference type="ChEBI" id="CHEBI:15378"/>
        <dbReference type="ChEBI" id="CHEBI:57705"/>
        <dbReference type="ChEBI" id="CHEBI:58223"/>
        <dbReference type="ChEBI" id="CHEBI:61387"/>
        <dbReference type="ChEBI" id="CHEBI:61388"/>
        <dbReference type="EC" id="2.4.1.227"/>
    </reaction>
</comment>
<comment type="pathway">
    <text evidence="1">Cell wall biogenesis; peptidoglycan biosynthesis.</text>
</comment>
<comment type="subcellular location">
    <subcellularLocation>
        <location evidence="1">Cell inner membrane</location>
        <topology evidence="1">Peripheral membrane protein</topology>
        <orientation evidence="1">Cytoplasmic side</orientation>
    </subcellularLocation>
</comment>
<comment type="similarity">
    <text evidence="1">Belongs to the glycosyltransferase 28 family. MurG subfamily.</text>
</comment>
<dbReference type="EC" id="2.4.1.227" evidence="1"/>
<dbReference type="EMBL" id="CP001396">
    <property type="protein sequence ID" value="ACR63851.1"/>
    <property type="molecule type" value="Genomic_DNA"/>
</dbReference>
<dbReference type="RefSeq" id="WP_000016560.1">
    <property type="nucleotide sequence ID" value="NC_012759.1"/>
</dbReference>
<dbReference type="SMR" id="C4ZRI5"/>
<dbReference type="CAZy" id="GT28">
    <property type="family name" value="Glycosyltransferase Family 28"/>
</dbReference>
<dbReference type="KEGG" id="ebw:BWG_0085"/>
<dbReference type="HOGENOM" id="CLU_037404_2_0_6"/>
<dbReference type="UniPathway" id="UPA00219"/>
<dbReference type="GO" id="GO:0005886">
    <property type="term" value="C:plasma membrane"/>
    <property type="evidence" value="ECO:0007669"/>
    <property type="project" value="UniProtKB-SubCell"/>
</dbReference>
<dbReference type="GO" id="GO:0051991">
    <property type="term" value="F:UDP-N-acetyl-D-glucosamine:N-acetylmuramoyl-L-alanyl-D-glutamyl-meso-2,6-diaminopimelyl-D-alanyl-D-alanine-diphosphoundecaprenol 4-beta-N-acetylglucosaminlytransferase activity"/>
    <property type="evidence" value="ECO:0007669"/>
    <property type="project" value="RHEA"/>
</dbReference>
<dbReference type="GO" id="GO:0050511">
    <property type="term" value="F:undecaprenyldiphospho-muramoylpentapeptide beta-N-acetylglucosaminyltransferase activity"/>
    <property type="evidence" value="ECO:0007669"/>
    <property type="project" value="UniProtKB-UniRule"/>
</dbReference>
<dbReference type="GO" id="GO:0005975">
    <property type="term" value="P:carbohydrate metabolic process"/>
    <property type="evidence" value="ECO:0007669"/>
    <property type="project" value="InterPro"/>
</dbReference>
<dbReference type="GO" id="GO:0051301">
    <property type="term" value="P:cell division"/>
    <property type="evidence" value="ECO:0007669"/>
    <property type="project" value="UniProtKB-KW"/>
</dbReference>
<dbReference type="GO" id="GO:0071555">
    <property type="term" value="P:cell wall organization"/>
    <property type="evidence" value="ECO:0007669"/>
    <property type="project" value="UniProtKB-KW"/>
</dbReference>
<dbReference type="GO" id="GO:0030259">
    <property type="term" value="P:lipid glycosylation"/>
    <property type="evidence" value="ECO:0007669"/>
    <property type="project" value="UniProtKB-UniRule"/>
</dbReference>
<dbReference type="GO" id="GO:0009252">
    <property type="term" value="P:peptidoglycan biosynthetic process"/>
    <property type="evidence" value="ECO:0007669"/>
    <property type="project" value="UniProtKB-UniRule"/>
</dbReference>
<dbReference type="GO" id="GO:0008360">
    <property type="term" value="P:regulation of cell shape"/>
    <property type="evidence" value="ECO:0007669"/>
    <property type="project" value="UniProtKB-KW"/>
</dbReference>
<dbReference type="CDD" id="cd03785">
    <property type="entry name" value="GT28_MurG"/>
    <property type="match status" value="1"/>
</dbReference>
<dbReference type="FunFam" id="3.40.50.2000:FF:000016">
    <property type="entry name" value="UDP-N-acetylglucosamine--N-acetylmuramyl-(pentapeptide) pyrophosphoryl-undecaprenol N-acetylglucosamine transferase"/>
    <property type="match status" value="1"/>
</dbReference>
<dbReference type="FunFam" id="3.40.50.2000:FF:000018">
    <property type="entry name" value="UDP-N-acetylglucosamine--N-acetylmuramyl-(pentapeptide) pyrophosphoryl-undecaprenol N-acetylglucosamine transferase"/>
    <property type="match status" value="1"/>
</dbReference>
<dbReference type="Gene3D" id="3.40.50.2000">
    <property type="entry name" value="Glycogen Phosphorylase B"/>
    <property type="match status" value="2"/>
</dbReference>
<dbReference type="HAMAP" id="MF_00033">
    <property type="entry name" value="MurG"/>
    <property type="match status" value="1"/>
</dbReference>
<dbReference type="InterPro" id="IPR006009">
    <property type="entry name" value="GlcNAc_MurG"/>
</dbReference>
<dbReference type="InterPro" id="IPR007235">
    <property type="entry name" value="Glyco_trans_28_C"/>
</dbReference>
<dbReference type="InterPro" id="IPR004276">
    <property type="entry name" value="GlycoTrans_28_N"/>
</dbReference>
<dbReference type="NCBIfam" id="TIGR01133">
    <property type="entry name" value="murG"/>
    <property type="match status" value="1"/>
</dbReference>
<dbReference type="PANTHER" id="PTHR21015:SF22">
    <property type="entry name" value="GLYCOSYLTRANSFERASE"/>
    <property type="match status" value="1"/>
</dbReference>
<dbReference type="PANTHER" id="PTHR21015">
    <property type="entry name" value="UDP-N-ACETYLGLUCOSAMINE--N-ACETYLMURAMYL-(PENTAPEPTIDE) PYROPHOSPHORYL-UNDECAPRENOL N-ACETYLGLUCOSAMINE TRANSFERASE 1"/>
    <property type="match status" value="1"/>
</dbReference>
<dbReference type="Pfam" id="PF04101">
    <property type="entry name" value="Glyco_tran_28_C"/>
    <property type="match status" value="1"/>
</dbReference>
<dbReference type="Pfam" id="PF03033">
    <property type="entry name" value="Glyco_transf_28"/>
    <property type="match status" value="1"/>
</dbReference>
<dbReference type="SUPFAM" id="SSF53756">
    <property type="entry name" value="UDP-Glycosyltransferase/glycogen phosphorylase"/>
    <property type="match status" value="1"/>
</dbReference>
<reference key="1">
    <citation type="journal article" date="2009" name="J. Bacteriol.">
        <title>Genomic sequencing reveals regulatory mutations and recombinational events in the widely used MC4100 lineage of Escherichia coli K-12.</title>
        <authorList>
            <person name="Ferenci T."/>
            <person name="Zhou Z."/>
            <person name="Betteridge T."/>
            <person name="Ren Y."/>
            <person name="Liu Y."/>
            <person name="Feng L."/>
            <person name="Reeves P.R."/>
            <person name="Wang L."/>
        </authorList>
    </citation>
    <scope>NUCLEOTIDE SEQUENCE [LARGE SCALE GENOMIC DNA]</scope>
    <source>
        <strain>K12 / MC4100 / BW2952</strain>
    </source>
</reference>
<keyword id="KW-0131">Cell cycle</keyword>
<keyword id="KW-0132">Cell division</keyword>
<keyword id="KW-0997">Cell inner membrane</keyword>
<keyword id="KW-1003">Cell membrane</keyword>
<keyword id="KW-0133">Cell shape</keyword>
<keyword id="KW-0961">Cell wall biogenesis/degradation</keyword>
<keyword id="KW-0328">Glycosyltransferase</keyword>
<keyword id="KW-0472">Membrane</keyword>
<keyword id="KW-0573">Peptidoglycan synthesis</keyword>
<keyword id="KW-0808">Transferase</keyword>